<reference key="1">
    <citation type="journal article" date="2010" name="PLoS ONE">
        <title>The complete genome sequence of Cupriavidus metallidurans strain CH34, a master survivalist in harsh and anthropogenic environments.</title>
        <authorList>
            <person name="Janssen P.J."/>
            <person name="Van Houdt R."/>
            <person name="Moors H."/>
            <person name="Monsieurs P."/>
            <person name="Morin N."/>
            <person name="Michaux A."/>
            <person name="Benotmane M.A."/>
            <person name="Leys N."/>
            <person name="Vallaeys T."/>
            <person name="Lapidus A."/>
            <person name="Monchy S."/>
            <person name="Medigue C."/>
            <person name="Taghavi S."/>
            <person name="McCorkle S."/>
            <person name="Dunn J."/>
            <person name="van der Lelie D."/>
            <person name="Mergeay M."/>
        </authorList>
    </citation>
    <scope>NUCLEOTIDE SEQUENCE [LARGE SCALE GENOMIC DNA]</scope>
    <source>
        <strain>ATCC 43123 / DSM 2839 / NBRC 102507 / CH34</strain>
    </source>
</reference>
<feature type="chain" id="PRO_0000265869" description="ATP synthase epsilon chain">
    <location>
        <begin position="1"/>
        <end position="138"/>
    </location>
</feature>
<gene>
    <name evidence="1" type="primary">atpC</name>
    <name type="ordered locus">Rmet_3493</name>
</gene>
<dbReference type="EMBL" id="CP000352">
    <property type="protein sequence ID" value="ABF10365.1"/>
    <property type="molecule type" value="Genomic_DNA"/>
</dbReference>
<dbReference type="RefSeq" id="WP_011517921.1">
    <property type="nucleotide sequence ID" value="NC_007973.1"/>
</dbReference>
<dbReference type="SMR" id="Q1LHL1"/>
<dbReference type="STRING" id="266264.Rmet_3493"/>
<dbReference type="KEGG" id="rme:Rmet_3493"/>
<dbReference type="eggNOG" id="COG0355">
    <property type="taxonomic scope" value="Bacteria"/>
</dbReference>
<dbReference type="HOGENOM" id="CLU_084338_2_0_4"/>
<dbReference type="Proteomes" id="UP000002429">
    <property type="component" value="Chromosome"/>
</dbReference>
<dbReference type="GO" id="GO:0005886">
    <property type="term" value="C:plasma membrane"/>
    <property type="evidence" value="ECO:0007669"/>
    <property type="project" value="UniProtKB-SubCell"/>
</dbReference>
<dbReference type="GO" id="GO:0045259">
    <property type="term" value="C:proton-transporting ATP synthase complex"/>
    <property type="evidence" value="ECO:0007669"/>
    <property type="project" value="UniProtKB-KW"/>
</dbReference>
<dbReference type="GO" id="GO:0005524">
    <property type="term" value="F:ATP binding"/>
    <property type="evidence" value="ECO:0007669"/>
    <property type="project" value="UniProtKB-UniRule"/>
</dbReference>
<dbReference type="GO" id="GO:0046933">
    <property type="term" value="F:proton-transporting ATP synthase activity, rotational mechanism"/>
    <property type="evidence" value="ECO:0007669"/>
    <property type="project" value="UniProtKB-UniRule"/>
</dbReference>
<dbReference type="CDD" id="cd12152">
    <property type="entry name" value="F1-ATPase_delta"/>
    <property type="match status" value="1"/>
</dbReference>
<dbReference type="FunFam" id="2.60.15.10:FF:000001">
    <property type="entry name" value="ATP synthase epsilon chain"/>
    <property type="match status" value="1"/>
</dbReference>
<dbReference type="Gene3D" id="1.20.5.440">
    <property type="entry name" value="ATP synthase delta/epsilon subunit, C-terminal domain"/>
    <property type="match status" value="1"/>
</dbReference>
<dbReference type="Gene3D" id="2.60.15.10">
    <property type="entry name" value="F0F1 ATP synthase delta/epsilon subunit, N-terminal"/>
    <property type="match status" value="1"/>
</dbReference>
<dbReference type="HAMAP" id="MF_00530">
    <property type="entry name" value="ATP_synth_epsil_bac"/>
    <property type="match status" value="1"/>
</dbReference>
<dbReference type="InterPro" id="IPR036794">
    <property type="entry name" value="ATP_F1_dsu/esu_C_sf"/>
</dbReference>
<dbReference type="InterPro" id="IPR001469">
    <property type="entry name" value="ATP_synth_F1_dsu/esu"/>
</dbReference>
<dbReference type="InterPro" id="IPR020546">
    <property type="entry name" value="ATP_synth_F1_dsu/esu_N"/>
</dbReference>
<dbReference type="InterPro" id="IPR020547">
    <property type="entry name" value="ATP_synth_F1_esu_C"/>
</dbReference>
<dbReference type="InterPro" id="IPR036771">
    <property type="entry name" value="ATPsynth_dsu/esu_N"/>
</dbReference>
<dbReference type="NCBIfam" id="TIGR01216">
    <property type="entry name" value="ATP_synt_epsi"/>
    <property type="match status" value="1"/>
</dbReference>
<dbReference type="NCBIfam" id="NF001847">
    <property type="entry name" value="PRK00571.1-4"/>
    <property type="match status" value="1"/>
</dbReference>
<dbReference type="PANTHER" id="PTHR13822">
    <property type="entry name" value="ATP SYNTHASE DELTA/EPSILON CHAIN"/>
    <property type="match status" value="1"/>
</dbReference>
<dbReference type="PANTHER" id="PTHR13822:SF10">
    <property type="entry name" value="ATP SYNTHASE EPSILON CHAIN, CHLOROPLASTIC"/>
    <property type="match status" value="1"/>
</dbReference>
<dbReference type="Pfam" id="PF00401">
    <property type="entry name" value="ATP-synt_DE"/>
    <property type="match status" value="1"/>
</dbReference>
<dbReference type="Pfam" id="PF02823">
    <property type="entry name" value="ATP-synt_DE_N"/>
    <property type="match status" value="1"/>
</dbReference>
<dbReference type="SUPFAM" id="SSF46604">
    <property type="entry name" value="Epsilon subunit of F1F0-ATP synthase C-terminal domain"/>
    <property type="match status" value="1"/>
</dbReference>
<dbReference type="SUPFAM" id="SSF51344">
    <property type="entry name" value="Epsilon subunit of F1F0-ATP synthase N-terminal domain"/>
    <property type="match status" value="1"/>
</dbReference>
<name>ATPE_CUPMC</name>
<evidence type="ECO:0000255" key="1">
    <source>
        <dbReference type="HAMAP-Rule" id="MF_00530"/>
    </source>
</evidence>
<protein>
    <recommendedName>
        <fullName evidence="1">ATP synthase epsilon chain</fullName>
    </recommendedName>
    <alternativeName>
        <fullName evidence="1">ATP synthase F1 sector epsilon subunit</fullName>
    </alternativeName>
    <alternativeName>
        <fullName evidence="1">F-ATPase epsilon subunit</fullName>
    </alternativeName>
</protein>
<accession>Q1LHL1</accession>
<proteinExistence type="inferred from homology"/>
<comment type="function">
    <text evidence="1">Produces ATP from ADP in the presence of a proton gradient across the membrane.</text>
</comment>
<comment type="subunit">
    <text>F-type ATPases have 2 components, CF(1) - the catalytic core - and CF(0) - the membrane proton channel. CF(1) has five subunits: alpha(3), beta(3), gamma(1), delta(1), epsilon(1). CF(0) has three main subunits: a, b and c.</text>
</comment>
<comment type="subcellular location">
    <subcellularLocation>
        <location evidence="1">Cell inner membrane</location>
        <topology evidence="1">Peripheral membrane protein</topology>
    </subcellularLocation>
</comment>
<comment type="similarity">
    <text evidence="1">Belongs to the ATPase epsilon chain family.</text>
</comment>
<sequence length="138" mass="14530">MATILVDVVSAEASIFSGQAKFVALPGESGELGILPGHTPLITRIQPGAVRIEKEDGGEEFVFVAGGILEVQPQHVTVLADTAIRGTDLDEAKASEAKRAAEEMLQNQSSDLDLARAQSELAVAAAQLAAIARLRRKK</sequence>
<organism>
    <name type="scientific">Cupriavidus metallidurans (strain ATCC 43123 / DSM 2839 / NBRC 102507 / CH34)</name>
    <name type="common">Ralstonia metallidurans</name>
    <dbReference type="NCBI Taxonomy" id="266264"/>
    <lineage>
        <taxon>Bacteria</taxon>
        <taxon>Pseudomonadati</taxon>
        <taxon>Pseudomonadota</taxon>
        <taxon>Betaproteobacteria</taxon>
        <taxon>Burkholderiales</taxon>
        <taxon>Burkholderiaceae</taxon>
        <taxon>Cupriavidus</taxon>
    </lineage>
</organism>
<keyword id="KW-0066">ATP synthesis</keyword>
<keyword id="KW-0997">Cell inner membrane</keyword>
<keyword id="KW-1003">Cell membrane</keyword>
<keyword id="KW-0139">CF(1)</keyword>
<keyword id="KW-0375">Hydrogen ion transport</keyword>
<keyword id="KW-0406">Ion transport</keyword>
<keyword id="KW-0472">Membrane</keyword>
<keyword id="KW-1185">Reference proteome</keyword>
<keyword id="KW-0813">Transport</keyword>